<protein>
    <recommendedName>
        <fullName evidence="1">Alanine racemase</fullName>
        <ecNumber evidence="1">5.1.1.1</ecNumber>
    </recommendedName>
</protein>
<dbReference type="EC" id="5.1.1.1" evidence="1"/>
<dbReference type="EMBL" id="CP000050">
    <property type="protein sequence ID" value="AAY50758.1"/>
    <property type="molecule type" value="Genomic_DNA"/>
</dbReference>
<dbReference type="RefSeq" id="WP_011038730.1">
    <property type="nucleotide sequence ID" value="NC_007086.1"/>
</dbReference>
<dbReference type="SMR" id="Q4UQB5"/>
<dbReference type="KEGG" id="xcb:XC_3718"/>
<dbReference type="HOGENOM" id="CLU_028393_1_0_6"/>
<dbReference type="UniPathway" id="UPA00042">
    <property type="reaction ID" value="UER00497"/>
</dbReference>
<dbReference type="Proteomes" id="UP000000420">
    <property type="component" value="Chromosome"/>
</dbReference>
<dbReference type="GO" id="GO:0005829">
    <property type="term" value="C:cytosol"/>
    <property type="evidence" value="ECO:0007669"/>
    <property type="project" value="TreeGrafter"/>
</dbReference>
<dbReference type="GO" id="GO:0008784">
    <property type="term" value="F:alanine racemase activity"/>
    <property type="evidence" value="ECO:0007669"/>
    <property type="project" value="UniProtKB-UniRule"/>
</dbReference>
<dbReference type="GO" id="GO:0030170">
    <property type="term" value="F:pyridoxal phosphate binding"/>
    <property type="evidence" value="ECO:0007669"/>
    <property type="project" value="UniProtKB-UniRule"/>
</dbReference>
<dbReference type="GO" id="GO:0030632">
    <property type="term" value="P:D-alanine biosynthetic process"/>
    <property type="evidence" value="ECO:0007669"/>
    <property type="project" value="UniProtKB-UniRule"/>
</dbReference>
<dbReference type="CDD" id="cd06827">
    <property type="entry name" value="PLPDE_III_AR_proteobact"/>
    <property type="match status" value="1"/>
</dbReference>
<dbReference type="FunFam" id="2.40.37.10:FF:000002">
    <property type="entry name" value="Alanine racemase"/>
    <property type="match status" value="1"/>
</dbReference>
<dbReference type="FunFam" id="3.20.20.10:FF:000002">
    <property type="entry name" value="Alanine racemase"/>
    <property type="match status" value="1"/>
</dbReference>
<dbReference type="Gene3D" id="3.20.20.10">
    <property type="entry name" value="Alanine racemase"/>
    <property type="match status" value="1"/>
</dbReference>
<dbReference type="Gene3D" id="2.40.37.10">
    <property type="entry name" value="Lyase, Ornithine Decarboxylase, Chain A, domain 1"/>
    <property type="match status" value="1"/>
</dbReference>
<dbReference type="HAMAP" id="MF_01201">
    <property type="entry name" value="Ala_racemase"/>
    <property type="match status" value="1"/>
</dbReference>
<dbReference type="InterPro" id="IPR000821">
    <property type="entry name" value="Ala_racemase"/>
</dbReference>
<dbReference type="InterPro" id="IPR009006">
    <property type="entry name" value="Ala_racemase/Decarboxylase_C"/>
</dbReference>
<dbReference type="InterPro" id="IPR011079">
    <property type="entry name" value="Ala_racemase_C"/>
</dbReference>
<dbReference type="InterPro" id="IPR001608">
    <property type="entry name" value="Ala_racemase_N"/>
</dbReference>
<dbReference type="InterPro" id="IPR020622">
    <property type="entry name" value="Ala_racemase_pyridoxalP-BS"/>
</dbReference>
<dbReference type="InterPro" id="IPR029066">
    <property type="entry name" value="PLP-binding_barrel"/>
</dbReference>
<dbReference type="NCBIfam" id="TIGR00492">
    <property type="entry name" value="alr"/>
    <property type="match status" value="1"/>
</dbReference>
<dbReference type="PANTHER" id="PTHR30511">
    <property type="entry name" value="ALANINE RACEMASE"/>
    <property type="match status" value="1"/>
</dbReference>
<dbReference type="PANTHER" id="PTHR30511:SF0">
    <property type="entry name" value="ALANINE RACEMASE, CATABOLIC-RELATED"/>
    <property type="match status" value="1"/>
</dbReference>
<dbReference type="Pfam" id="PF00842">
    <property type="entry name" value="Ala_racemase_C"/>
    <property type="match status" value="1"/>
</dbReference>
<dbReference type="Pfam" id="PF01168">
    <property type="entry name" value="Ala_racemase_N"/>
    <property type="match status" value="1"/>
</dbReference>
<dbReference type="PRINTS" id="PR00992">
    <property type="entry name" value="ALARACEMASE"/>
</dbReference>
<dbReference type="SMART" id="SM01005">
    <property type="entry name" value="Ala_racemase_C"/>
    <property type="match status" value="1"/>
</dbReference>
<dbReference type="SUPFAM" id="SSF50621">
    <property type="entry name" value="Alanine racemase C-terminal domain-like"/>
    <property type="match status" value="1"/>
</dbReference>
<dbReference type="SUPFAM" id="SSF51419">
    <property type="entry name" value="PLP-binding barrel"/>
    <property type="match status" value="1"/>
</dbReference>
<dbReference type="PROSITE" id="PS00395">
    <property type="entry name" value="ALANINE_RACEMASE"/>
    <property type="match status" value="1"/>
</dbReference>
<name>ALR_XANC8</name>
<feature type="chain" id="PRO_1000066063" description="Alanine racemase">
    <location>
        <begin position="1"/>
        <end position="360"/>
    </location>
</feature>
<feature type="active site" description="Proton acceptor; specific for D-alanine" evidence="1">
    <location>
        <position position="33"/>
    </location>
</feature>
<feature type="active site" description="Proton acceptor; specific for L-alanine" evidence="1">
    <location>
        <position position="253"/>
    </location>
</feature>
<feature type="binding site" evidence="1">
    <location>
        <position position="129"/>
    </location>
    <ligand>
        <name>substrate</name>
    </ligand>
</feature>
<feature type="binding site" evidence="1">
    <location>
        <position position="301"/>
    </location>
    <ligand>
        <name>substrate</name>
    </ligand>
</feature>
<feature type="modified residue" description="N6-(pyridoxal phosphate)lysine" evidence="1">
    <location>
        <position position="33"/>
    </location>
</feature>
<proteinExistence type="inferred from homology"/>
<evidence type="ECO:0000255" key="1">
    <source>
        <dbReference type="HAMAP-Rule" id="MF_01201"/>
    </source>
</evidence>
<sequence length="360" mass="39247">MRPAQALIDLDALRHNYRLARQLGGGKALAVVKADAYGHGAVRCAQALEPEADGFAVACIEEALELRQAGVRAPILLLEGFFEHDELALIAEHDLWTVVATPWQVRALAEFRSPRPLRVWLKLDSGMHRLGLSPEDFRAAWLHLRGLPQIDSLVLMTHLAQADELECSRTDEQAVAFALTCGGMRAETSLRNSPGLLGWPALRNDWSRPGLMLYGANPFPQPSELTAQLRPVMTVRSRIISVRDLPAGEPVGYGARFVAERPTRVGVVAMGYADGYPQFAPNGTPVLVDGKVCPLIGRVSMDMLTVDLTEHPHADVGTPVQLWGDAPQVSTLAAQCNVSAYQLLCGLKRVPRHYSTPAHA</sequence>
<accession>Q4UQB5</accession>
<gene>
    <name type="primary">alr</name>
    <name type="ordered locus">XC_3718</name>
</gene>
<reference key="1">
    <citation type="journal article" date="2005" name="Genome Res.">
        <title>Comparative and functional genomic analyses of the pathogenicity of phytopathogen Xanthomonas campestris pv. campestris.</title>
        <authorList>
            <person name="Qian W."/>
            <person name="Jia Y."/>
            <person name="Ren S.-X."/>
            <person name="He Y.-Q."/>
            <person name="Feng J.-X."/>
            <person name="Lu L.-F."/>
            <person name="Sun Q."/>
            <person name="Ying G."/>
            <person name="Tang D.-J."/>
            <person name="Tang H."/>
            <person name="Wu W."/>
            <person name="Hao P."/>
            <person name="Wang L."/>
            <person name="Jiang B.-L."/>
            <person name="Zeng S."/>
            <person name="Gu W.-Y."/>
            <person name="Lu G."/>
            <person name="Rong L."/>
            <person name="Tian Y."/>
            <person name="Yao Z."/>
            <person name="Fu G."/>
            <person name="Chen B."/>
            <person name="Fang R."/>
            <person name="Qiang B."/>
            <person name="Chen Z."/>
            <person name="Zhao G.-P."/>
            <person name="Tang J.-L."/>
            <person name="He C."/>
        </authorList>
    </citation>
    <scope>NUCLEOTIDE SEQUENCE [LARGE SCALE GENOMIC DNA]</scope>
    <source>
        <strain>8004</strain>
    </source>
</reference>
<organism>
    <name type="scientific">Xanthomonas campestris pv. campestris (strain 8004)</name>
    <dbReference type="NCBI Taxonomy" id="314565"/>
    <lineage>
        <taxon>Bacteria</taxon>
        <taxon>Pseudomonadati</taxon>
        <taxon>Pseudomonadota</taxon>
        <taxon>Gammaproteobacteria</taxon>
        <taxon>Lysobacterales</taxon>
        <taxon>Lysobacteraceae</taxon>
        <taxon>Xanthomonas</taxon>
    </lineage>
</organism>
<comment type="function">
    <text evidence="1">Catalyzes the interconversion of L-alanine and D-alanine. May also act on other amino acids.</text>
</comment>
<comment type="catalytic activity">
    <reaction evidence="1">
        <text>L-alanine = D-alanine</text>
        <dbReference type="Rhea" id="RHEA:20249"/>
        <dbReference type="ChEBI" id="CHEBI:57416"/>
        <dbReference type="ChEBI" id="CHEBI:57972"/>
        <dbReference type="EC" id="5.1.1.1"/>
    </reaction>
</comment>
<comment type="cofactor">
    <cofactor evidence="1">
        <name>pyridoxal 5'-phosphate</name>
        <dbReference type="ChEBI" id="CHEBI:597326"/>
    </cofactor>
</comment>
<comment type="pathway">
    <text evidence="1">Amino-acid biosynthesis; D-alanine biosynthesis; D-alanine from L-alanine: step 1/1.</text>
</comment>
<comment type="similarity">
    <text evidence="1">Belongs to the alanine racemase family.</text>
</comment>
<keyword id="KW-0413">Isomerase</keyword>
<keyword id="KW-0663">Pyridoxal phosphate</keyword>